<sequence>MLNLFILLLERVGLIILLAYILMNINHFKTMMSERDKWRSKFQLIIIFGIFSMISNFTGIEIENGHIVSGDIYYHLSKDASMANTRVLTIGVSGLIGGPWVAIIVGIISGLCRLYIGGADAYTYLISSIVIAIISGYFGHQTIKQNTYPSIKKGAIIGAITEIIQMGCILLFTNNLHHAITLVSFIALPMIIINSLGTAIFLTIILSTIKQEEQMRAVQTHDVLQLANETLPYFRSGLNEKSAQQAAEIILKLMQVSAVAITNKKDILTHIGAGSDHHVARKEIITDLSKEVIQSGKLKVAHTREGIGCHHPNCPLEGAIVVPLYIHNEVAGTLKFYFTDNNIISTSDQQLAKGLANIFSSQLELGQAEMQGQLLKDAEIKSLQAQVNPHFFFNAINTISALVRIDSEKARRLLIQLSQFFRSNLNGARNNTITLQKELQQVAAYLSLEQARYPNRFNIHYRIDDQCQDALIPPFIIQILVENSIKHAFKNRKKNNHIDVDVSMKQDYLSISVQDNGQGIPADQLDTIGYTTVTSTTGTGNALVNLNKRLTGLFGTTSALNIQSSQSGTTVSCLIPYKSSKEEHFNESVNR</sequence>
<keyword id="KW-0067">ATP-binding</keyword>
<keyword id="KW-1003">Cell membrane</keyword>
<keyword id="KW-0418">Kinase</keyword>
<keyword id="KW-0472">Membrane</keyword>
<keyword id="KW-0547">Nucleotide-binding</keyword>
<keyword id="KW-0597">Phosphoprotein</keyword>
<keyword id="KW-1185">Reference proteome</keyword>
<keyword id="KW-0808">Transferase</keyword>
<keyword id="KW-0812">Transmembrane</keyword>
<keyword id="KW-1133">Transmembrane helix</keyword>
<keyword id="KW-0902">Two-component regulatory system</keyword>
<comment type="function">
    <text evidence="1">Member of the two-component regulatory system LytR/LytS that probably regulates genes involved in cell wall metabolism.</text>
</comment>
<comment type="catalytic activity">
    <reaction>
        <text>ATP + protein L-histidine = ADP + protein N-phospho-L-histidine.</text>
        <dbReference type="EC" id="2.7.13.3"/>
    </reaction>
</comment>
<comment type="subcellular location">
    <subcellularLocation>
        <location evidence="1">Cell membrane</location>
        <topology evidence="1">Multi-pass membrane protein</topology>
    </subcellularLocation>
</comment>
<organism>
    <name type="scientific">Staphylococcus epidermidis (strain ATCC 35984 / DSM 28319 / BCRC 17069 / CCUG 31568 / BM 3577 / RP62A)</name>
    <dbReference type="NCBI Taxonomy" id="176279"/>
    <lineage>
        <taxon>Bacteria</taxon>
        <taxon>Bacillati</taxon>
        <taxon>Bacillota</taxon>
        <taxon>Bacilli</taxon>
        <taxon>Bacillales</taxon>
        <taxon>Staphylococcaceae</taxon>
        <taxon>Staphylococcus</taxon>
    </lineage>
</organism>
<protein>
    <recommendedName>
        <fullName>Sensor protein LytS</fullName>
        <ecNumber>2.7.13.3</ecNumber>
    </recommendedName>
    <alternativeName>
        <fullName>Autolysin sensor kinase</fullName>
    </alternativeName>
</protein>
<feature type="chain" id="PRO_0000074800" description="Sensor protein LytS">
    <location>
        <begin position="1"/>
        <end position="591"/>
    </location>
</feature>
<feature type="transmembrane region" description="Helical" evidence="2">
    <location>
        <begin position="4"/>
        <end position="26"/>
    </location>
</feature>
<feature type="transmembrane region" description="Helical" evidence="2">
    <location>
        <begin position="45"/>
        <end position="67"/>
    </location>
</feature>
<feature type="transmembrane region" description="Helical" evidence="2">
    <location>
        <begin position="87"/>
        <end position="109"/>
    </location>
</feature>
<feature type="transmembrane region" description="Helical" evidence="2">
    <location>
        <begin position="122"/>
        <end position="139"/>
    </location>
</feature>
<feature type="transmembrane region" description="Helical" evidence="2">
    <location>
        <begin position="154"/>
        <end position="176"/>
    </location>
</feature>
<feature type="transmembrane region" description="Helical" evidence="2">
    <location>
        <begin position="183"/>
        <end position="205"/>
    </location>
</feature>
<feature type="domain" description="Histidine kinase">
    <location>
        <begin position="363"/>
        <end position="579"/>
    </location>
</feature>
<feature type="modified residue" description="Phosphohistidine; by autocatalysis" evidence="1">
    <location>
        <position position="390"/>
    </location>
</feature>
<gene>
    <name type="primary">lytS</name>
    <name type="ordered locus">SERP2024</name>
</gene>
<reference key="1">
    <citation type="journal article" date="2005" name="J. Bacteriol.">
        <title>Insights on evolution of virulence and resistance from the complete genome analysis of an early methicillin-resistant Staphylococcus aureus strain and a biofilm-producing methicillin-resistant Staphylococcus epidermidis strain.</title>
        <authorList>
            <person name="Gill S.R."/>
            <person name="Fouts D.E."/>
            <person name="Archer G.L."/>
            <person name="Mongodin E.F."/>
            <person name="DeBoy R.T."/>
            <person name="Ravel J."/>
            <person name="Paulsen I.T."/>
            <person name="Kolonay J.F."/>
            <person name="Brinkac L.M."/>
            <person name="Beanan M.J."/>
            <person name="Dodson R.J."/>
            <person name="Daugherty S.C."/>
            <person name="Madupu R."/>
            <person name="Angiuoli S.V."/>
            <person name="Durkin A.S."/>
            <person name="Haft D.H."/>
            <person name="Vamathevan J.J."/>
            <person name="Khouri H."/>
            <person name="Utterback T.R."/>
            <person name="Lee C."/>
            <person name="Dimitrov G."/>
            <person name="Jiang L."/>
            <person name="Qin H."/>
            <person name="Weidman J."/>
            <person name="Tran K."/>
            <person name="Kang K.H."/>
            <person name="Hance I.R."/>
            <person name="Nelson K.E."/>
            <person name="Fraser C.M."/>
        </authorList>
    </citation>
    <scope>NUCLEOTIDE SEQUENCE [LARGE SCALE GENOMIC DNA]</scope>
    <source>
        <strain>ATCC 35984 / DSM 28319 / BCRC 17069 / CCUG 31568 / BM 3577 / RP62A</strain>
    </source>
</reference>
<dbReference type="EC" id="2.7.13.3"/>
<dbReference type="EMBL" id="CP000029">
    <property type="protein sequence ID" value="AAW52842.1"/>
    <property type="molecule type" value="Genomic_DNA"/>
</dbReference>
<dbReference type="RefSeq" id="WP_001831559.1">
    <property type="nucleotide sequence ID" value="NC_002976.3"/>
</dbReference>
<dbReference type="SMR" id="Q5HLG3"/>
<dbReference type="STRING" id="176279.SERP2024"/>
<dbReference type="KEGG" id="ser:SERP2024"/>
<dbReference type="eggNOG" id="COG3275">
    <property type="taxonomic scope" value="Bacteria"/>
</dbReference>
<dbReference type="HOGENOM" id="CLU_020473_3_3_9"/>
<dbReference type="Proteomes" id="UP000000531">
    <property type="component" value="Chromosome"/>
</dbReference>
<dbReference type="GO" id="GO:0005886">
    <property type="term" value="C:plasma membrane"/>
    <property type="evidence" value="ECO:0007669"/>
    <property type="project" value="UniProtKB-SubCell"/>
</dbReference>
<dbReference type="GO" id="GO:0005524">
    <property type="term" value="F:ATP binding"/>
    <property type="evidence" value="ECO:0007669"/>
    <property type="project" value="UniProtKB-KW"/>
</dbReference>
<dbReference type="GO" id="GO:0000155">
    <property type="term" value="F:phosphorelay sensor kinase activity"/>
    <property type="evidence" value="ECO:0007669"/>
    <property type="project" value="InterPro"/>
</dbReference>
<dbReference type="GO" id="GO:0071555">
    <property type="term" value="P:cell wall organization"/>
    <property type="evidence" value="ECO:0007669"/>
    <property type="project" value="InterPro"/>
</dbReference>
<dbReference type="Gene3D" id="1.10.1760.20">
    <property type="match status" value="1"/>
</dbReference>
<dbReference type="Gene3D" id="3.30.450.40">
    <property type="match status" value="1"/>
</dbReference>
<dbReference type="Gene3D" id="3.30.565.10">
    <property type="entry name" value="Histidine kinase-like ATPase, C-terminal domain"/>
    <property type="match status" value="1"/>
</dbReference>
<dbReference type="InterPro" id="IPR050640">
    <property type="entry name" value="Bact_2-comp_sensor_kinase"/>
</dbReference>
<dbReference type="InterPro" id="IPR029016">
    <property type="entry name" value="GAF-like_dom_sf"/>
</dbReference>
<dbReference type="InterPro" id="IPR036890">
    <property type="entry name" value="HATPase_C_sf"/>
</dbReference>
<dbReference type="InterPro" id="IPR010559">
    <property type="entry name" value="Sig_transdc_His_kin_internal"/>
</dbReference>
<dbReference type="InterPro" id="IPR011620">
    <property type="entry name" value="Sig_transdc_His_kinase_LytS_TM"/>
</dbReference>
<dbReference type="PANTHER" id="PTHR34220">
    <property type="entry name" value="SENSOR HISTIDINE KINASE YPDA"/>
    <property type="match status" value="1"/>
</dbReference>
<dbReference type="PANTHER" id="PTHR34220:SF7">
    <property type="entry name" value="SENSOR HISTIDINE KINASE YPDA"/>
    <property type="match status" value="1"/>
</dbReference>
<dbReference type="Pfam" id="PF07694">
    <property type="entry name" value="5TM-5TMR_LYT"/>
    <property type="match status" value="1"/>
</dbReference>
<dbReference type="Pfam" id="PF02518">
    <property type="entry name" value="HATPase_c"/>
    <property type="match status" value="1"/>
</dbReference>
<dbReference type="Pfam" id="PF06580">
    <property type="entry name" value="His_kinase"/>
    <property type="match status" value="1"/>
</dbReference>
<dbReference type="SMART" id="SM00387">
    <property type="entry name" value="HATPase_c"/>
    <property type="match status" value="1"/>
</dbReference>
<dbReference type="SUPFAM" id="SSF55874">
    <property type="entry name" value="ATPase domain of HSP90 chaperone/DNA topoisomerase II/histidine kinase"/>
    <property type="match status" value="1"/>
</dbReference>
<dbReference type="SUPFAM" id="SSF55781">
    <property type="entry name" value="GAF domain-like"/>
    <property type="match status" value="1"/>
</dbReference>
<proteinExistence type="inferred from homology"/>
<evidence type="ECO:0000250" key="1"/>
<evidence type="ECO:0000255" key="2"/>
<accession>Q5HLG3</accession>
<name>LYTS_STAEQ</name>